<sequence length="380" mass="43437">MATECIATVPQIFSENKTKEDSSIFDAKLLNQHSHHIPQQFVWPDHEKPSTDVQPLQVPLIDLAGFLSGDSCLASEATRLVSKAATKHGFFLITNHGVDESLLSRAYLHMDSFFKAPACEKQKAQRKWGESSGYASSFVGRFSSKLPWKETLSFKFSPEEKIHSQTVKDFVSKKMGDGYEDFGKVYQEYAEAMNTLSLKIMELLGMSLGVERRYFKEFFEDSDSIFRLNYYPQCKQPELALGTGPHCDPTSLTILHQDQVGGLQVFVDNKWQSIPPNPHAFVVNIGDTFMALTNGRYKSCLHRAVVNSERERKTFAFFLCPKGEKVVKPPEELVNGVKSGERKYPDFTWSMFLEFTQKHYRADMNTLDEFSIWLKNRRSF</sequence>
<reference key="1">
    <citation type="journal article" date="1995" name="Plant Physiol.">
        <title>Isolation and expression of three gibberellin 20-oxidase cDNA clones from Arabidopsis.</title>
        <authorList>
            <person name="Phillips A.L."/>
            <person name="Ward D.A."/>
            <person name="Uknes S."/>
            <person name="Appleford N.E.J."/>
            <person name="Lange T."/>
            <person name="Huttly A.K."/>
            <person name="Gaskin P."/>
            <person name="Graebe J.E."/>
            <person name="Hedden P."/>
        </authorList>
    </citation>
    <scope>NUCLEOTIDE SEQUENCE [MRNA]</scope>
    <scope>FUNCTION</scope>
    <scope>CATALYTIC ACTIVITY</scope>
    <scope>TISSUE SPECIFICITY</scope>
    <source>
        <strain>cv. Columbia</strain>
        <tissue>Silique</tissue>
    </source>
</reference>
<reference key="2">
    <citation type="journal article" date="2000" name="Nature">
        <title>Sequence and analysis of chromosome 5 of the plant Arabidopsis thaliana.</title>
        <authorList>
            <person name="Tabata S."/>
            <person name="Kaneko T."/>
            <person name="Nakamura Y."/>
            <person name="Kotani H."/>
            <person name="Kato T."/>
            <person name="Asamizu E."/>
            <person name="Miyajima N."/>
            <person name="Sasamoto S."/>
            <person name="Kimura T."/>
            <person name="Hosouchi T."/>
            <person name="Kawashima K."/>
            <person name="Kohara M."/>
            <person name="Matsumoto M."/>
            <person name="Matsuno A."/>
            <person name="Muraki A."/>
            <person name="Nakayama S."/>
            <person name="Nakazaki N."/>
            <person name="Naruo K."/>
            <person name="Okumura S."/>
            <person name="Shinpo S."/>
            <person name="Takeuchi C."/>
            <person name="Wada T."/>
            <person name="Watanabe A."/>
            <person name="Yamada M."/>
            <person name="Yasuda M."/>
            <person name="Sato S."/>
            <person name="de la Bastide M."/>
            <person name="Huang E."/>
            <person name="Spiegel L."/>
            <person name="Gnoj L."/>
            <person name="O'Shaughnessy A."/>
            <person name="Preston R."/>
            <person name="Habermann K."/>
            <person name="Murray J."/>
            <person name="Johnson D."/>
            <person name="Rohlfing T."/>
            <person name="Nelson J."/>
            <person name="Stoneking T."/>
            <person name="Pepin K."/>
            <person name="Spieth J."/>
            <person name="Sekhon M."/>
            <person name="Armstrong J."/>
            <person name="Becker M."/>
            <person name="Belter E."/>
            <person name="Cordum H."/>
            <person name="Cordes M."/>
            <person name="Courtney L."/>
            <person name="Courtney W."/>
            <person name="Dante M."/>
            <person name="Du H."/>
            <person name="Edwards J."/>
            <person name="Fryman J."/>
            <person name="Haakensen B."/>
            <person name="Lamar E."/>
            <person name="Latreille P."/>
            <person name="Leonard S."/>
            <person name="Meyer R."/>
            <person name="Mulvaney E."/>
            <person name="Ozersky P."/>
            <person name="Riley A."/>
            <person name="Strowmatt C."/>
            <person name="Wagner-McPherson C."/>
            <person name="Wollam A."/>
            <person name="Yoakum M."/>
            <person name="Bell M."/>
            <person name="Dedhia N."/>
            <person name="Parnell L."/>
            <person name="Shah R."/>
            <person name="Rodriguez M."/>
            <person name="Hoon See L."/>
            <person name="Vil D."/>
            <person name="Baker J."/>
            <person name="Kirchoff K."/>
            <person name="Toth K."/>
            <person name="King L."/>
            <person name="Bahret A."/>
            <person name="Miller B."/>
            <person name="Marra M.A."/>
            <person name="Martienssen R."/>
            <person name="McCombie W.R."/>
            <person name="Wilson R.K."/>
            <person name="Murphy G."/>
            <person name="Bancroft I."/>
            <person name="Volckaert G."/>
            <person name="Wambutt R."/>
            <person name="Duesterhoeft A."/>
            <person name="Stiekema W."/>
            <person name="Pohl T."/>
            <person name="Entian K.-D."/>
            <person name="Terryn N."/>
            <person name="Hartley N."/>
            <person name="Bent E."/>
            <person name="Johnson S."/>
            <person name="Langham S.-A."/>
            <person name="McCullagh B."/>
            <person name="Robben J."/>
            <person name="Grymonprez B."/>
            <person name="Zimmermann W."/>
            <person name="Ramsperger U."/>
            <person name="Wedler H."/>
            <person name="Balke K."/>
            <person name="Wedler E."/>
            <person name="Peters S."/>
            <person name="van Staveren M."/>
            <person name="Dirkse W."/>
            <person name="Mooijman P."/>
            <person name="Klein Lankhorst R."/>
            <person name="Weitzenegger T."/>
            <person name="Bothe G."/>
            <person name="Rose M."/>
            <person name="Hauf J."/>
            <person name="Berneiser S."/>
            <person name="Hempel S."/>
            <person name="Feldpausch M."/>
            <person name="Lamberth S."/>
            <person name="Villarroel R."/>
            <person name="Gielen J."/>
            <person name="Ardiles W."/>
            <person name="Bents O."/>
            <person name="Lemcke K."/>
            <person name="Kolesov G."/>
            <person name="Mayer K.F.X."/>
            <person name="Rudd S."/>
            <person name="Schoof H."/>
            <person name="Schueller C."/>
            <person name="Zaccaria P."/>
            <person name="Mewes H.-W."/>
            <person name="Bevan M."/>
            <person name="Fransz P.F."/>
        </authorList>
    </citation>
    <scope>NUCLEOTIDE SEQUENCE [LARGE SCALE GENOMIC DNA]</scope>
    <source>
        <strain>cv. Columbia</strain>
    </source>
</reference>
<reference key="3">
    <citation type="journal article" date="2017" name="Plant J.">
        <title>Araport11: a complete reannotation of the Arabidopsis thaliana reference genome.</title>
        <authorList>
            <person name="Cheng C.Y."/>
            <person name="Krishnakumar V."/>
            <person name="Chan A.P."/>
            <person name="Thibaud-Nissen F."/>
            <person name="Schobel S."/>
            <person name="Town C.D."/>
        </authorList>
    </citation>
    <scope>GENOME REANNOTATION</scope>
    <source>
        <strain>cv. Columbia</strain>
    </source>
</reference>
<reference key="4">
    <citation type="journal article" date="2003" name="Science">
        <title>Empirical analysis of transcriptional activity in the Arabidopsis genome.</title>
        <authorList>
            <person name="Yamada K."/>
            <person name="Lim J."/>
            <person name="Dale J.M."/>
            <person name="Chen H."/>
            <person name="Shinn P."/>
            <person name="Palm C.J."/>
            <person name="Southwick A.M."/>
            <person name="Wu H.C."/>
            <person name="Kim C.J."/>
            <person name="Nguyen M."/>
            <person name="Pham P.K."/>
            <person name="Cheuk R.F."/>
            <person name="Karlin-Newmann G."/>
            <person name="Liu S.X."/>
            <person name="Lam B."/>
            <person name="Sakano H."/>
            <person name="Wu T."/>
            <person name="Yu G."/>
            <person name="Miranda M."/>
            <person name="Quach H.L."/>
            <person name="Tripp M."/>
            <person name="Chang C.H."/>
            <person name="Lee J.M."/>
            <person name="Toriumi M.J."/>
            <person name="Chan M.M."/>
            <person name="Tang C.C."/>
            <person name="Onodera C.S."/>
            <person name="Deng J.M."/>
            <person name="Akiyama K."/>
            <person name="Ansari Y."/>
            <person name="Arakawa T."/>
            <person name="Banh J."/>
            <person name="Banno F."/>
            <person name="Bowser L."/>
            <person name="Brooks S.Y."/>
            <person name="Carninci P."/>
            <person name="Chao Q."/>
            <person name="Choy N."/>
            <person name="Enju A."/>
            <person name="Goldsmith A.D."/>
            <person name="Gurjal M."/>
            <person name="Hansen N.F."/>
            <person name="Hayashizaki Y."/>
            <person name="Johnson-Hopson C."/>
            <person name="Hsuan V.W."/>
            <person name="Iida K."/>
            <person name="Karnes M."/>
            <person name="Khan S."/>
            <person name="Koesema E."/>
            <person name="Ishida J."/>
            <person name="Jiang P.X."/>
            <person name="Jones T."/>
            <person name="Kawai J."/>
            <person name="Kamiya A."/>
            <person name="Meyers C."/>
            <person name="Nakajima M."/>
            <person name="Narusaka M."/>
            <person name="Seki M."/>
            <person name="Sakurai T."/>
            <person name="Satou M."/>
            <person name="Tamse R."/>
            <person name="Vaysberg M."/>
            <person name="Wallender E.K."/>
            <person name="Wong C."/>
            <person name="Yamamura Y."/>
            <person name="Yuan S."/>
            <person name="Shinozaki K."/>
            <person name="Davis R.W."/>
            <person name="Theologis A."/>
            <person name="Ecker J.R."/>
        </authorList>
    </citation>
    <scope>NUCLEOTIDE SEQUENCE [LARGE SCALE MRNA]</scope>
    <source>
        <strain>cv. Columbia</strain>
    </source>
</reference>
<reference key="5">
    <citation type="journal article" date="2005" name="Plant Cell Physiol.">
        <title>Contribution of gibberellins to the formation of Arabidopsis seed coat through starch degradation.</title>
        <authorList>
            <person name="Kim Y.C."/>
            <person name="Nakajima M."/>
            <person name="Nakayama A."/>
            <person name="Yamaguchi I."/>
        </authorList>
    </citation>
    <scope>DEVELOPMENTAL STAGE</scope>
    <scope>TISSUE SPECIFICITY</scope>
</reference>
<reference key="6">
    <citation type="journal article" date="2006" name="Plant Physiol.">
        <title>Transcriptional regulation of gibberellin metabolism genes by auxin signaling in Arabidopsis.</title>
        <authorList>
            <person name="Frigerio M."/>
            <person name="Alabadi D."/>
            <person name="Perez-Gomez J."/>
            <person name="Garcia-Carcel L."/>
            <person name="Phillips A.L."/>
            <person name="Hedden P."/>
            <person name="Blazquez M.A."/>
        </authorList>
    </citation>
    <scope>INDUCTION BY AUXIN AND PACLOBUTRAZOL</scope>
</reference>
<reference key="7">
    <citation type="journal article" date="2008" name="Plant J.">
        <title>The gibberellin biosynthetic genes AtGA20ox1 and AtGA20ox2 act, partially redundantly, to promote growth and development throughout the Arabidopsis life cycle.</title>
        <authorList>
            <person name="Rieu I."/>
            <person name="Ruiz-Rivero O."/>
            <person name="Fernandez-Garcia N."/>
            <person name="Griffiths J."/>
            <person name="Powers S.J."/>
            <person name="Gong F."/>
            <person name="Linhartova T."/>
            <person name="Eriksson S."/>
            <person name="Nilsson O."/>
            <person name="Thomas S.G."/>
            <person name="Phillips A.L."/>
            <person name="Hedden P."/>
        </authorList>
    </citation>
    <scope>TISSUE SPECIFICITY</scope>
    <scope>INDUCTION BY GIBBERELLIN</scope>
    <source>
        <strain>cv. Columbia</strain>
    </source>
</reference>
<reference key="8">
    <citation type="journal article" date="2011" name="Gene">
        <title>Evolutionary analysis of three gibberellin oxidase genes in rice, Arabidopsis, and soybean.</title>
        <authorList>
            <person name="Han F."/>
            <person name="Zhu B."/>
        </authorList>
    </citation>
    <scope>GENE FAMILY</scope>
</reference>
<name>GAOX3_ARATH</name>
<gene>
    <name type="primary">GA20OX3</name>
    <name type="synonym">20ox3</name>
    <name type="synonym">YAP169</name>
    <name type="ordered locus">At5g07200</name>
    <name type="ORF">T28J14_140</name>
</gene>
<evidence type="ECO:0000255" key="1"/>
<evidence type="ECO:0000255" key="2">
    <source>
        <dbReference type="PROSITE-ProRule" id="PRU00805"/>
    </source>
</evidence>
<evidence type="ECO:0000269" key="3">
    <source>
    </source>
</evidence>
<evidence type="ECO:0000269" key="4">
    <source>
    </source>
</evidence>
<evidence type="ECO:0000269" key="5">
    <source>
    </source>
</evidence>
<evidence type="ECO:0000269" key="6">
    <source>
    </source>
</evidence>
<evidence type="ECO:0000305" key="7"/>
<evidence type="ECO:0000305" key="8">
    <source>
    </source>
</evidence>
<dbReference type="EC" id="1.14.11.-" evidence="6"/>
<dbReference type="EMBL" id="X83381">
    <property type="protein sequence ID" value="CAA58295.1"/>
    <property type="molecule type" value="mRNA"/>
</dbReference>
<dbReference type="EMBL" id="AL163652">
    <property type="protein sequence ID" value="CAB87276.1"/>
    <property type="molecule type" value="Genomic_DNA"/>
</dbReference>
<dbReference type="EMBL" id="CP002688">
    <property type="protein sequence ID" value="AED91121.1"/>
    <property type="molecule type" value="Genomic_DNA"/>
</dbReference>
<dbReference type="EMBL" id="BT004311">
    <property type="protein sequence ID" value="AAO42308.1"/>
    <property type="molecule type" value="mRNA"/>
</dbReference>
<dbReference type="EMBL" id="BT005615">
    <property type="protein sequence ID" value="AAO64035.1"/>
    <property type="molecule type" value="mRNA"/>
</dbReference>
<dbReference type="PIR" id="T48491">
    <property type="entry name" value="T48491"/>
</dbReference>
<dbReference type="RefSeq" id="NP_196337.1">
    <property type="nucleotide sequence ID" value="NM_120802.2"/>
</dbReference>
<dbReference type="SMR" id="Q39112"/>
<dbReference type="FunCoup" id="Q39112">
    <property type="interactions" value="20"/>
</dbReference>
<dbReference type="STRING" id="3702.Q39112"/>
<dbReference type="iPTMnet" id="Q39112"/>
<dbReference type="PaxDb" id="3702-AT5G07200.1"/>
<dbReference type="ProteomicsDB" id="228964"/>
<dbReference type="EnsemblPlants" id="AT5G07200.1">
    <property type="protein sequence ID" value="AT5G07200.1"/>
    <property type="gene ID" value="AT5G07200"/>
</dbReference>
<dbReference type="GeneID" id="830611"/>
<dbReference type="Gramene" id="AT5G07200.1">
    <property type="protein sequence ID" value="AT5G07200.1"/>
    <property type="gene ID" value="AT5G07200"/>
</dbReference>
<dbReference type="KEGG" id="ath:AT5G07200"/>
<dbReference type="Araport" id="AT5G07200"/>
<dbReference type="TAIR" id="AT5G07200">
    <property type="gene designation" value="GA20OX3"/>
</dbReference>
<dbReference type="eggNOG" id="KOG0143">
    <property type="taxonomic scope" value="Eukaryota"/>
</dbReference>
<dbReference type="HOGENOM" id="CLU_010119_16_3_1"/>
<dbReference type="InParanoid" id="Q39112"/>
<dbReference type="OMA" id="CKEMNRL"/>
<dbReference type="PhylomeDB" id="Q39112"/>
<dbReference type="BioCyc" id="MetaCyc:AT5G07200-MONOMER"/>
<dbReference type="UniPathway" id="UPA00390"/>
<dbReference type="PRO" id="PR:Q39112"/>
<dbReference type="Proteomes" id="UP000006548">
    <property type="component" value="Chromosome 5"/>
</dbReference>
<dbReference type="ExpressionAtlas" id="Q39112">
    <property type="expression patterns" value="baseline and differential"/>
</dbReference>
<dbReference type="GO" id="GO:0045544">
    <property type="term" value="F:gibberellin 20-oxidase activity"/>
    <property type="evidence" value="ECO:0000314"/>
    <property type="project" value="TAIR"/>
</dbReference>
<dbReference type="GO" id="GO:0046872">
    <property type="term" value="F:metal ion binding"/>
    <property type="evidence" value="ECO:0007669"/>
    <property type="project" value="UniProtKB-KW"/>
</dbReference>
<dbReference type="GO" id="GO:0009686">
    <property type="term" value="P:gibberellin biosynthetic process"/>
    <property type="evidence" value="ECO:0000304"/>
    <property type="project" value="TAIR"/>
</dbReference>
<dbReference type="FunFam" id="2.60.120.330:FF:000003">
    <property type="entry name" value="Gibberellin 20 oxidase 2"/>
    <property type="match status" value="1"/>
</dbReference>
<dbReference type="Gene3D" id="2.60.120.330">
    <property type="entry name" value="B-lactam Antibiotic, Isopenicillin N Synthase, Chain"/>
    <property type="match status" value="1"/>
</dbReference>
<dbReference type="InterPro" id="IPR026992">
    <property type="entry name" value="DIOX_N"/>
</dbReference>
<dbReference type="InterPro" id="IPR044861">
    <property type="entry name" value="IPNS-like_FE2OG_OXY"/>
</dbReference>
<dbReference type="InterPro" id="IPR027443">
    <property type="entry name" value="IPNS-like_sf"/>
</dbReference>
<dbReference type="InterPro" id="IPR050231">
    <property type="entry name" value="Iron_ascorbate_oxido_reductase"/>
</dbReference>
<dbReference type="InterPro" id="IPR005123">
    <property type="entry name" value="Oxoglu/Fe-dep_dioxygenase_dom"/>
</dbReference>
<dbReference type="PANTHER" id="PTHR47990">
    <property type="entry name" value="2-OXOGLUTARATE (2OG) AND FE(II)-DEPENDENT OXYGENASE SUPERFAMILY PROTEIN-RELATED"/>
    <property type="match status" value="1"/>
</dbReference>
<dbReference type="Pfam" id="PF03171">
    <property type="entry name" value="2OG-FeII_Oxy"/>
    <property type="match status" value="1"/>
</dbReference>
<dbReference type="Pfam" id="PF14226">
    <property type="entry name" value="DIOX_N"/>
    <property type="match status" value="1"/>
</dbReference>
<dbReference type="PRINTS" id="PR00682">
    <property type="entry name" value="IPNSYNTHASE"/>
</dbReference>
<dbReference type="SUPFAM" id="SSF51197">
    <property type="entry name" value="Clavaminate synthase-like"/>
    <property type="match status" value="1"/>
</dbReference>
<dbReference type="PROSITE" id="PS51471">
    <property type="entry name" value="FE2OG_OXY"/>
    <property type="match status" value="1"/>
</dbReference>
<comment type="function">
    <text evidence="6">Key oxidase enzyme in the biosynthesis of gibberellin that catalyzes the conversion of GA12 and GA53 to GA9 and GA20 respectively, via a three-step oxidation at C-20 of the GA skeleton, and GA25 is also formed as a minor product. GA53 is less effectively oxidized than GA12.</text>
</comment>
<comment type="catalytic activity">
    <reaction evidence="6">
        <text>gibberellin A12 + 2 2-oxoglutarate + 3 O2 + H(+) = gibberellin A9 + 2 succinate + 3 CO2 + 2 H2O</text>
        <dbReference type="Rhea" id="RHEA:60772"/>
        <dbReference type="ChEBI" id="CHEBI:15377"/>
        <dbReference type="ChEBI" id="CHEBI:15378"/>
        <dbReference type="ChEBI" id="CHEBI:15379"/>
        <dbReference type="ChEBI" id="CHEBI:16526"/>
        <dbReference type="ChEBI" id="CHEBI:16810"/>
        <dbReference type="ChEBI" id="CHEBI:30031"/>
        <dbReference type="ChEBI" id="CHEBI:58627"/>
        <dbReference type="ChEBI" id="CHEBI:73255"/>
    </reaction>
    <physiologicalReaction direction="left-to-right" evidence="6">
        <dbReference type="Rhea" id="RHEA:60773"/>
    </physiologicalReaction>
</comment>
<comment type="catalytic activity">
    <reaction evidence="6">
        <text>gibberellin A12 + 3 2-oxoglutarate + 3 O2 = gibberellin A25 + 3 succinate + 3 CO2 + H2O + H(+)</text>
        <dbReference type="Rhea" id="RHEA:60768"/>
        <dbReference type="ChEBI" id="CHEBI:15377"/>
        <dbReference type="ChEBI" id="CHEBI:15378"/>
        <dbReference type="ChEBI" id="CHEBI:15379"/>
        <dbReference type="ChEBI" id="CHEBI:16526"/>
        <dbReference type="ChEBI" id="CHEBI:16810"/>
        <dbReference type="ChEBI" id="CHEBI:30031"/>
        <dbReference type="ChEBI" id="CHEBI:58627"/>
        <dbReference type="ChEBI" id="CHEBI:143959"/>
    </reaction>
    <physiologicalReaction direction="left-to-right" evidence="6">
        <dbReference type="Rhea" id="RHEA:60769"/>
    </physiologicalReaction>
</comment>
<comment type="catalytic activity">
    <reaction evidence="6">
        <text>gibberellin A53 + 2 2-oxoglutarate + 3 O2 + H(+) = gibberellin A20 + 2 succinate + 3 CO2 + 2 H2O</text>
        <dbReference type="Rhea" id="RHEA:60796"/>
        <dbReference type="ChEBI" id="CHEBI:15377"/>
        <dbReference type="ChEBI" id="CHEBI:15378"/>
        <dbReference type="ChEBI" id="CHEBI:15379"/>
        <dbReference type="ChEBI" id="CHEBI:16526"/>
        <dbReference type="ChEBI" id="CHEBI:16810"/>
        <dbReference type="ChEBI" id="CHEBI:30031"/>
        <dbReference type="ChEBI" id="CHEBI:58526"/>
        <dbReference type="ChEBI" id="CHEBI:143954"/>
    </reaction>
    <physiologicalReaction direction="left-to-right" evidence="6">
        <dbReference type="Rhea" id="RHEA:60797"/>
    </physiologicalReaction>
</comment>
<comment type="cofactor">
    <cofactor>
        <name>Fe(2+)</name>
        <dbReference type="ChEBI" id="CHEBI:29033"/>
    </cofactor>
    <text>Binds 1 Fe(2+) ion per subunit.</text>
</comment>
<comment type="cofactor">
    <cofactor>
        <name>L-ascorbate</name>
        <dbReference type="ChEBI" id="CHEBI:38290"/>
    </cofactor>
</comment>
<comment type="pathway">
    <text>Plant hormone biosynthesis; gibberellin biosynthesis.</text>
</comment>
<comment type="tissue specificity">
    <text evidence="3 5 6">Expressed at high level in developing siliques. Detected in seeds, roots, leaves and inflorescences. In seeds, specifically detected at the outer layer of the outer integument.</text>
</comment>
<comment type="developmental stage">
    <text evidence="3">Expressed in developing siliques 3-13 days after pollination.</text>
</comment>
<comment type="induction">
    <text evidence="4 5">Negatively controlled by the level of physiologically active gibberellin. Not regulated by auxin. Up-regulated by paclobutrazol.</text>
</comment>
<comment type="similarity">
    <text evidence="7">Belongs to the iron/ascorbate-dependent oxidoreductase family. GA20OX subfamily.</text>
</comment>
<keyword id="KW-0408">Iron</keyword>
<keyword id="KW-0479">Metal-binding</keyword>
<keyword id="KW-0560">Oxidoreductase</keyword>
<keyword id="KW-1185">Reference proteome</keyword>
<organism>
    <name type="scientific">Arabidopsis thaliana</name>
    <name type="common">Mouse-ear cress</name>
    <dbReference type="NCBI Taxonomy" id="3702"/>
    <lineage>
        <taxon>Eukaryota</taxon>
        <taxon>Viridiplantae</taxon>
        <taxon>Streptophyta</taxon>
        <taxon>Embryophyta</taxon>
        <taxon>Tracheophyta</taxon>
        <taxon>Spermatophyta</taxon>
        <taxon>Magnoliopsida</taxon>
        <taxon>eudicotyledons</taxon>
        <taxon>Gunneridae</taxon>
        <taxon>Pentapetalae</taxon>
        <taxon>rosids</taxon>
        <taxon>malvids</taxon>
        <taxon>Brassicales</taxon>
        <taxon>Brassicaceae</taxon>
        <taxon>Camelineae</taxon>
        <taxon>Arabidopsis</taxon>
    </lineage>
</organism>
<proteinExistence type="evidence at protein level"/>
<accession>Q39112</accession>
<feature type="chain" id="PRO_0000219516" description="Gibberellin 20 oxidase 3">
    <location>
        <begin position="1"/>
        <end position="380"/>
    </location>
</feature>
<feature type="domain" description="Fe2OG dioxygenase" evidence="2">
    <location>
        <begin position="221"/>
        <end position="321"/>
    </location>
</feature>
<feature type="active site" evidence="1">
    <location>
        <position position="312"/>
    </location>
</feature>
<feature type="binding site" evidence="2">
    <location>
        <position position="246"/>
    </location>
    <ligand>
        <name>Fe cation</name>
        <dbReference type="ChEBI" id="CHEBI:24875"/>
    </ligand>
</feature>
<feature type="binding site" evidence="2">
    <location>
        <position position="248"/>
    </location>
    <ligand>
        <name>Fe cation</name>
        <dbReference type="ChEBI" id="CHEBI:24875"/>
    </ligand>
</feature>
<feature type="binding site" evidence="2">
    <location>
        <position position="302"/>
    </location>
    <ligand>
        <name>Fe cation</name>
        <dbReference type="ChEBI" id="CHEBI:24875"/>
    </ligand>
</feature>
<protein>
    <recommendedName>
        <fullName evidence="8">Gibberellin 20 oxidase 3</fullName>
        <ecNumber evidence="6">1.14.11.-</ecNumber>
    </recommendedName>
    <alternativeName>
        <fullName>GA 20-oxidase 3</fullName>
    </alternativeName>
    <alternativeName>
        <fullName evidence="8">Gibberellin C-20 oxidase 3</fullName>
    </alternativeName>
</protein>